<gene>
    <name evidence="1" type="primary">glmU</name>
    <name type="ordered locus">SF3810</name>
    <name type="ordered locus">S3958</name>
</gene>
<keyword id="KW-0012">Acyltransferase</keyword>
<keyword id="KW-0133">Cell shape</keyword>
<keyword id="KW-0961">Cell wall biogenesis/degradation</keyword>
<keyword id="KW-0963">Cytoplasm</keyword>
<keyword id="KW-0460">Magnesium</keyword>
<keyword id="KW-0479">Metal-binding</keyword>
<keyword id="KW-0511">Multifunctional enzyme</keyword>
<keyword id="KW-0548">Nucleotidyltransferase</keyword>
<keyword id="KW-0573">Peptidoglycan synthesis</keyword>
<keyword id="KW-1185">Reference proteome</keyword>
<keyword id="KW-0677">Repeat</keyword>
<keyword id="KW-0808">Transferase</keyword>
<reference key="1">
    <citation type="journal article" date="2002" name="Nucleic Acids Res.">
        <title>Genome sequence of Shigella flexneri 2a: insights into pathogenicity through comparison with genomes of Escherichia coli K12 and O157.</title>
        <authorList>
            <person name="Jin Q."/>
            <person name="Yuan Z."/>
            <person name="Xu J."/>
            <person name="Wang Y."/>
            <person name="Shen Y."/>
            <person name="Lu W."/>
            <person name="Wang J."/>
            <person name="Liu H."/>
            <person name="Yang J."/>
            <person name="Yang F."/>
            <person name="Zhang X."/>
            <person name="Zhang J."/>
            <person name="Yang G."/>
            <person name="Wu H."/>
            <person name="Qu D."/>
            <person name="Dong J."/>
            <person name="Sun L."/>
            <person name="Xue Y."/>
            <person name="Zhao A."/>
            <person name="Gao Y."/>
            <person name="Zhu J."/>
            <person name="Kan B."/>
            <person name="Ding K."/>
            <person name="Chen S."/>
            <person name="Cheng H."/>
            <person name="Yao Z."/>
            <person name="He B."/>
            <person name="Chen R."/>
            <person name="Ma D."/>
            <person name="Qiang B."/>
            <person name="Wen Y."/>
            <person name="Hou Y."/>
            <person name="Yu J."/>
        </authorList>
    </citation>
    <scope>NUCLEOTIDE SEQUENCE [LARGE SCALE GENOMIC DNA]</scope>
    <source>
        <strain>301 / Serotype 2a</strain>
    </source>
</reference>
<reference key="2">
    <citation type="journal article" date="2003" name="Infect. Immun.">
        <title>Complete genome sequence and comparative genomics of Shigella flexneri serotype 2a strain 2457T.</title>
        <authorList>
            <person name="Wei J."/>
            <person name="Goldberg M.B."/>
            <person name="Burland V."/>
            <person name="Venkatesan M.M."/>
            <person name="Deng W."/>
            <person name="Fournier G."/>
            <person name="Mayhew G.F."/>
            <person name="Plunkett G. III"/>
            <person name="Rose D.J."/>
            <person name="Darling A."/>
            <person name="Mau B."/>
            <person name="Perna N.T."/>
            <person name="Payne S.M."/>
            <person name="Runyen-Janecky L.J."/>
            <person name="Zhou S."/>
            <person name="Schwartz D.C."/>
            <person name="Blattner F.R."/>
        </authorList>
    </citation>
    <scope>NUCLEOTIDE SEQUENCE [LARGE SCALE GENOMIC DNA]</scope>
    <source>
        <strain>ATCC 700930 / 2457T / Serotype 2a</strain>
    </source>
</reference>
<proteinExistence type="inferred from homology"/>
<sequence length="456" mass="49204">MLNNAMSVVILAAGKGTRMYSDLPKVLHTLAGKAMVQHVIDAANELGAAHVHLVYGHGGDLLKQALKDDNLNWVLQAEQLGTGHAMQQAAPFFADDEDILMLYGDVPLISVETLQRLRDAKPQGGIGLLTVKLDDPTGYGRITRENGKVTGIVEHKDATDEQRQIQEINTGILIANGADMKRWLAKLTNNNAQGEYYITDIIALAYQEGREIVAVHPQRLSEVEGVNNRLQLSRLERVYQSEQAEKLLLAGVMLRDPARFDLRGTLTHGRDVEIDTNVIIEGNVTLGHRVKIGTGCVIKNSVIGDDCEISPYTVVEDANLAAACTIGPFARLRPGAELLEGAHVGNFVEMKKARLGKGTKAGHLTYLGDAEIGDNVNIGAGTITCNYDGANKFKTIIGDDVFVGSDTQLVAPVTVGKGATIAAGTTVTRNVGENALAISRVPQTQKEGWRRPVKKK</sequence>
<feature type="chain" id="PRO_0000233842" description="Bifunctional protein GlmU">
    <location>
        <begin position="1"/>
        <end position="456"/>
    </location>
</feature>
<feature type="region of interest" description="Pyrophosphorylase" evidence="1">
    <location>
        <begin position="1"/>
        <end position="229"/>
    </location>
</feature>
<feature type="region of interest" description="Linker" evidence="1">
    <location>
        <begin position="230"/>
        <end position="250"/>
    </location>
</feature>
<feature type="region of interest" description="N-acetyltransferase" evidence="1">
    <location>
        <begin position="251"/>
        <end position="456"/>
    </location>
</feature>
<feature type="active site" description="Proton acceptor" evidence="1">
    <location>
        <position position="363"/>
    </location>
</feature>
<feature type="binding site" evidence="1">
    <location>
        <begin position="11"/>
        <end position="14"/>
    </location>
    <ligand>
        <name>UDP-N-acetyl-alpha-D-glucosamine</name>
        <dbReference type="ChEBI" id="CHEBI:57705"/>
    </ligand>
</feature>
<feature type="binding site" evidence="1">
    <location>
        <position position="25"/>
    </location>
    <ligand>
        <name>UDP-N-acetyl-alpha-D-glucosamine</name>
        <dbReference type="ChEBI" id="CHEBI:57705"/>
    </ligand>
</feature>
<feature type="binding site" evidence="1">
    <location>
        <position position="76"/>
    </location>
    <ligand>
        <name>UDP-N-acetyl-alpha-D-glucosamine</name>
        <dbReference type="ChEBI" id="CHEBI:57705"/>
    </ligand>
</feature>
<feature type="binding site" evidence="1">
    <location>
        <begin position="81"/>
        <end position="82"/>
    </location>
    <ligand>
        <name>UDP-N-acetyl-alpha-D-glucosamine</name>
        <dbReference type="ChEBI" id="CHEBI:57705"/>
    </ligand>
</feature>
<feature type="binding site" evidence="1">
    <location>
        <begin position="103"/>
        <end position="105"/>
    </location>
    <ligand>
        <name>UDP-N-acetyl-alpha-D-glucosamine</name>
        <dbReference type="ChEBI" id="CHEBI:57705"/>
    </ligand>
</feature>
<feature type="binding site" evidence="1">
    <location>
        <position position="105"/>
    </location>
    <ligand>
        <name>Mg(2+)</name>
        <dbReference type="ChEBI" id="CHEBI:18420"/>
    </ligand>
</feature>
<feature type="binding site" evidence="1">
    <location>
        <position position="140"/>
    </location>
    <ligand>
        <name>UDP-N-acetyl-alpha-D-glucosamine</name>
        <dbReference type="ChEBI" id="CHEBI:57705"/>
    </ligand>
</feature>
<feature type="binding site" evidence="1">
    <location>
        <position position="154"/>
    </location>
    <ligand>
        <name>UDP-N-acetyl-alpha-D-glucosamine</name>
        <dbReference type="ChEBI" id="CHEBI:57705"/>
    </ligand>
</feature>
<feature type="binding site" evidence="1">
    <location>
        <position position="169"/>
    </location>
    <ligand>
        <name>UDP-N-acetyl-alpha-D-glucosamine</name>
        <dbReference type="ChEBI" id="CHEBI:57705"/>
    </ligand>
</feature>
<feature type="binding site" evidence="1">
    <location>
        <position position="227"/>
    </location>
    <ligand>
        <name>Mg(2+)</name>
        <dbReference type="ChEBI" id="CHEBI:18420"/>
    </ligand>
</feature>
<feature type="binding site" evidence="1">
    <location>
        <position position="227"/>
    </location>
    <ligand>
        <name>UDP-N-acetyl-alpha-D-glucosamine</name>
        <dbReference type="ChEBI" id="CHEBI:57705"/>
    </ligand>
</feature>
<feature type="binding site" evidence="1">
    <location>
        <position position="333"/>
    </location>
    <ligand>
        <name>UDP-N-acetyl-alpha-D-glucosamine</name>
        <dbReference type="ChEBI" id="CHEBI:57705"/>
    </ligand>
</feature>
<feature type="binding site" evidence="1">
    <location>
        <position position="351"/>
    </location>
    <ligand>
        <name>UDP-N-acetyl-alpha-D-glucosamine</name>
        <dbReference type="ChEBI" id="CHEBI:57705"/>
    </ligand>
</feature>
<feature type="binding site" evidence="1">
    <location>
        <position position="366"/>
    </location>
    <ligand>
        <name>UDP-N-acetyl-alpha-D-glucosamine</name>
        <dbReference type="ChEBI" id="CHEBI:57705"/>
    </ligand>
</feature>
<feature type="binding site" evidence="1">
    <location>
        <position position="377"/>
    </location>
    <ligand>
        <name>UDP-N-acetyl-alpha-D-glucosamine</name>
        <dbReference type="ChEBI" id="CHEBI:57705"/>
    </ligand>
</feature>
<feature type="binding site" evidence="1">
    <location>
        <position position="380"/>
    </location>
    <ligand>
        <name>acetyl-CoA</name>
        <dbReference type="ChEBI" id="CHEBI:57288"/>
    </ligand>
</feature>
<feature type="binding site" evidence="1">
    <location>
        <begin position="386"/>
        <end position="387"/>
    </location>
    <ligand>
        <name>acetyl-CoA</name>
        <dbReference type="ChEBI" id="CHEBI:57288"/>
    </ligand>
</feature>
<feature type="binding site" evidence="1">
    <location>
        <position position="405"/>
    </location>
    <ligand>
        <name>acetyl-CoA</name>
        <dbReference type="ChEBI" id="CHEBI:57288"/>
    </ligand>
</feature>
<feature type="binding site" evidence="1">
    <location>
        <position position="423"/>
    </location>
    <ligand>
        <name>acetyl-CoA</name>
        <dbReference type="ChEBI" id="CHEBI:57288"/>
    </ligand>
</feature>
<feature type="binding site" evidence="1">
    <location>
        <position position="440"/>
    </location>
    <ligand>
        <name>acetyl-CoA</name>
        <dbReference type="ChEBI" id="CHEBI:57288"/>
    </ligand>
</feature>
<accession>Q83IY3</accession>
<accession>Q7BZA0</accession>
<dbReference type="EC" id="2.7.7.23" evidence="1"/>
<dbReference type="EC" id="2.3.1.157" evidence="1"/>
<dbReference type="EMBL" id="AE005674">
    <property type="protein sequence ID" value="AAN45250.1"/>
    <property type="molecule type" value="Genomic_DNA"/>
</dbReference>
<dbReference type="EMBL" id="AE014073">
    <property type="protein sequence ID" value="AAP18947.1"/>
    <property type="molecule type" value="Genomic_DNA"/>
</dbReference>
<dbReference type="RefSeq" id="NP_709543.1">
    <property type="nucleotide sequence ID" value="NC_004337.2"/>
</dbReference>
<dbReference type="RefSeq" id="WP_000933743.1">
    <property type="nucleotide sequence ID" value="NZ_WPGW01000050.1"/>
</dbReference>
<dbReference type="SMR" id="Q83IY3"/>
<dbReference type="STRING" id="198214.SF3810"/>
<dbReference type="PaxDb" id="198214-SF3810"/>
<dbReference type="GeneID" id="1026316"/>
<dbReference type="KEGG" id="sfl:SF3810"/>
<dbReference type="KEGG" id="sfx:S3958"/>
<dbReference type="PATRIC" id="fig|198214.7.peg.4497"/>
<dbReference type="HOGENOM" id="CLU_029499_15_2_6"/>
<dbReference type="UniPathway" id="UPA00113">
    <property type="reaction ID" value="UER00532"/>
</dbReference>
<dbReference type="UniPathway" id="UPA00113">
    <property type="reaction ID" value="UER00533"/>
</dbReference>
<dbReference type="UniPathway" id="UPA00973"/>
<dbReference type="Proteomes" id="UP000001006">
    <property type="component" value="Chromosome"/>
</dbReference>
<dbReference type="Proteomes" id="UP000002673">
    <property type="component" value="Chromosome"/>
</dbReference>
<dbReference type="GO" id="GO:0005737">
    <property type="term" value="C:cytoplasm"/>
    <property type="evidence" value="ECO:0007669"/>
    <property type="project" value="UniProtKB-SubCell"/>
</dbReference>
<dbReference type="GO" id="GO:0016020">
    <property type="term" value="C:membrane"/>
    <property type="evidence" value="ECO:0007669"/>
    <property type="project" value="GOC"/>
</dbReference>
<dbReference type="GO" id="GO:0019134">
    <property type="term" value="F:glucosamine-1-phosphate N-acetyltransferase activity"/>
    <property type="evidence" value="ECO:0007669"/>
    <property type="project" value="UniProtKB-UniRule"/>
</dbReference>
<dbReference type="GO" id="GO:0000287">
    <property type="term" value="F:magnesium ion binding"/>
    <property type="evidence" value="ECO:0007669"/>
    <property type="project" value="UniProtKB-UniRule"/>
</dbReference>
<dbReference type="GO" id="GO:0003977">
    <property type="term" value="F:UDP-N-acetylglucosamine diphosphorylase activity"/>
    <property type="evidence" value="ECO:0007669"/>
    <property type="project" value="UniProtKB-UniRule"/>
</dbReference>
<dbReference type="GO" id="GO:0000902">
    <property type="term" value="P:cell morphogenesis"/>
    <property type="evidence" value="ECO:0007669"/>
    <property type="project" value="UniProtKB-UniRule"/>
</dbReference>
<dbReference type="GO" id="GO:0071555">
    <property type="term" value="P:cell wall organization"/>
    <property type="evidence" value="ECO:0007669"/>
    <property type="project" value="UniProtKB-KW"/>
</dbReference>
<dbReference type="GO" id="GO:0009245">
    <property type="term" value="P:lipid A biosynthetic process"/>
    <property type="evidence" value="ECO:0007669"/>
    <property type="project" value="UniProtKB-UniRule"/>
</dbReference>
<dbReference type="GO" id="GO:0009252">
    <property type="term" value="P:peptidoglycan biosynthetic process"/>
    <property type="evidence" value="ECO:0007669"/>
    <property type="project" value="UniProtKB-UniRule"/>
</dbReference>
<dbReference type="GO" id="GO:0008360">
    <property type="term" value="P:regulation of cell shape"/>
    <property type="evidence" value="ECO:0007669"/>
    <property type="project" value="UniProtKB-KW"/>
</dbReference>
<dbReference type="GO" id="GO:0006048">
    <property type="term" value="P:UDP-N-acetylglucosamine biosynthetic process"/>
    <property type="evidence" value="ECO:0007669"/>
    <property type="project" value="UniProtKB-UniPathway"/>
</dbReference>
<dbReference type="CDD" id="cd02540">
    <property type="entry name" value="GT2_GlmU_N_bac"/>
    <property type="match status" value="1"/>
</dbReference>
<dbReference type="CDD" id="cd03353">
    <property type="entry name" value="LbH_GlmU_C"/>
    <property type="match status" value="1"/>
</dbReference>
<dbReference type="FunFam" id="2.160.10.10:FF:000011">
    <property type="entry name" value="Bifunctional protein GlmU"/>
    <property type="match status" value="1"/>
</dbReference>
<dbReference type="FunFam" id="3.90.550.10:FF:000006">
    <property type="entry name" value="Bifunctional protein GlmU"/>
    <property type="match status" value="1"/>
</dbReference>
<dbReference type="Gene3D" id="2.160.10.10">
    <property type="entry name" value="Hexapeptide repeat proteins"/>
    <property type="match status" value="1"/>
</dbReference>
<dbReference type="Gene3D" id="3.90.550.10">
    <property type="entry name" value="Spore Coat Polysaccharide Biosynthesis Protein SpsA, Chain A"/>
    <property type="match status" value="1"/>
</dbReference>
<dbReference type="HAMAP" id="MF_01631">
    <property type="entry name" value="GlmU"/>
    <property type="match status" value="1"/>
</dbReference>
<dbReference type="InterPro" id="IPR005882">
    <property type="entry name" value="Bifunctional_GlmU"/>
</dbReference>
<dbReference type="InterPro" id="IPR050065">
    <property type="entry name" value="GlmU-like"/>
</dbReference>
<dbReference type="InterPro" id="IPR038009">
    <property type="entry name" value="GlmU_C_LbH"/>
</dbReference>
<dbReference type="InterPro" id="IPR001451">
    <property type="entry name" value="Hexapep"/>
</dbReference>
<dbReference type="InterPro" id="IPR018357">
    <property type="entry name" value="Hexapep_transf_CS"/>
</dbReference>
<dbReference type="InterPro" id="IPR025877">
    <property type="entry name" value="MobA-like_NTP_Trfase"/>
</dbReference>
<dbReference type="InterPro" id="IPR029044">
    <property type="entry name" value="Nucleotide-diphossugar_trans"/>
</dbReference>
<dbReference type="InterPro" id="IPR011004">
    <property type="entry name" value="Trimer_LpxA-like_sf"/>
</dbReference>
<dbReference type="NCBIfam" id="TIGR01173">
    <property type="entry name" value="glmU"/>
    <property type="match status" value="1"/>
</dbReference>
<dbReference type="NCBIfam" id="NF006986">
    <property type="entry name" value="PRK09451.1"/>
    <property type="match status" value="1"/>
</dbReference>
<dbReference type="PANTHER" id="PTHR43584:SF3">
    <property type="entry name" value="BIFUNCTIONAL PROTEIN GLMU"/>
    <property type="match status" value="1"/>
</dbReference>
<dbReference type="PANTHER" id="PTHR43584">
    <property type="entry name" value="NUCLEOTIDYL TRANSFERASE"/>
    <property type="match status" value="1"/>
</dbReference>
<dbReference type="Pfam" id="PF00132">
    <property type="entry name" value="Hexapep"/>
    <property type="match status" value="1"/>
</dbReference>
<dbReference type="Pfam" id="PF12804">
    <property type="entry name" value="NTP_transf_3"/>
    <property type="match status" value="1"/>
</dbReference>
<dbReference type="SUPFAM" id="SSF53448">
    <property type="entry name" value="Nucleotide-diphospho-sugar transferases"/>
    <property type="match status" value="1"/>
</dbReference>
<dbReference type="SUPFAM" id="SSF51161">
    <property type="entry name" value="Trimeric LpxA-like enzymes"/>
    <property type="match status" value="1"/>
</dbReference>
<dbReference type="PROSITE" id="PS00101">
    <property type="entry name" value="HEXAPEP_TRANSFERASES"/>
    <property type="match status" value="1"/>
</dbReference>
<protein>
    <recommendedName>
        <fullName evidence="1">Bifunctional protein GlmU</fullName>
    </recommendedName>
    <domain>
        <recommendedName>
            <fullName evidence="1">UDP-N-acetylglucosamine pyrophosphorylase</fullName>
            <ecNumber evidence="1">2.7.7.23</ecNumber>
        </recommendedName>
        <alternativeName>
            <fullName evidence="1">N-acetylglucosamine-1-phosphate uridyltransferase</fullName>
        </alternativeName>
    </domain>
    <domain>
        <recommendedName>
            <fullName evidence="1">Glucosamine-1-phosphate N-acetyltransferase</fullName>
            <ecNumber evidence="1">2.3.1.157</ecNumber>
        </recommendedName>
    </domain>
</protein>
<comment type="function">
    <text evidence="1">Catalyzes the last two sequential reactions in the de novo biosynthetic pathway for UDP-N-acetylglucosamine (UDP-GlcNAc). The C-terminal domain catalyzes the transfer of acetyl group from acetyl coenzyme A to glucosamine-1-phosphate (GlcN-1-P) to produce N-acetylglucosamine-1-phosphate (GlcNAc-1-P), which is converted into UDP-GlcNAc by the transfer of uridine 5-monophosphate (from uridine 5-triphosphate), a reaction catalyzed by the N-terminal domain.</text>
</comment>
<comment type="catalytic activity">
    <reaction evidence="1">
        <text>alpha-D-glucosamine 1-phosphate + acetyl-CoA = N-acetyl-alpha-D-glucosamine 1-phosphate + CoA + H(+)</text>
        <dbReference type="Rhea" id="RHEA:13725"/>
        <dbReference type="ChEBI" id="CHEBI:15378"/>
        <dbReference type="ChEBI" id="CHEBI:57287"/>
        <dbReference type="ChEBI" id="CHEBI:57288"/>
        <dbReference type="ChEBI" id="CHEBI:57776"/>
        <dbReference type="ChEBI" id="CHEBI:58516"/>
        <dbReference type="EC" id="2.3.1.157"/>
    </reaction>
</comment>
<comment type="catalytic activity">
    <reaction evidence="1">
        <text>N-acetyl-alpha-D-glucosamine 1-phosphate + UTP + H(+) = UDP-N-acetyl-alpha-D-glucosamine + diphosphate</text>
        <dbReference type="Rhea" id="RHEA:13509"/>
        <dbReference type="ChEBI" id="CHEBI:15378"/>
        <dbReference type="ChEBI" id="CHEBI:33019"/>
        <dbReference type="ChEBI" id="CHEBI:46398"/>
        <dbReference type="ChEBI" id="CHEBI:57705"/>
        <dbReference type="ChEBI" id="CHEBI:57776"/>
        <dbReference type="EC" id="2.7.7.23"/>
    </reaction>
</comment>
<comment type="cofactor">
    <cofactor evidence="1">
        <name>Mg(2+)</name>
        <dbReference type="ChEBI" id="CHEBI:18420"/>
    </cofactor>
    <text evidence="1">Binds 1 Mg(2+) ion per subunit.</text>
</comment>
<comment type="pathway">
    <text evidence="1">Nucleotide-sugar biosynthesis; UDP-N-acetyl-alpha-D-glucosamine biosynthesis; N-acetyl-alpha-D-glucosamine 1-phosphate from alpha-D-glucosamine 6-phosphate (route II): step 2/2.</text>
</comment>
<comment type="pathway">
    <text evidence="1">Nucleotide-sugar biosynthesis; UDP-N-acetyl-alpha-D-glucosamine biosynthesis; UDP-N-acetyl-alpha-D-glucosamine from N-acetyl-alpha-D-glucosamine 1-phosphate: step 1/1.</text>
</comment>
<comment type="pathway">
    <text evidence="1">Bacterial outer membrane biogenesis; LPS lipid A biosynthesis.</text>
</comment>
<comment type="subunit">
    <text evidence="1">Homotrimer.</text>
</comment>
<comment type="subcellular location">
    <subcellularLocation>
        <location evidence="1">Cytoplasm</location>
    </subcellularLocation>
</comment>
<comment type="similarity">
    <text evidence="1">In the N-terminal section; belongs to the N-acetylglucosamine-1-phosphate uridyltransferase family.</text>
</comment>
<comment type="similarity">
    <text evidence="1">In the C-terminal section; belongs to the transferase hexapeptide repeat family.</text>
</comment>
<name>GLMU_SHIFL</name>
<evidence type="ECO:0000255" key="1">
    <source>
        <dbReference type="HAMAP-Rule" id="MF_01631"/>
    </source>
</evidence>
<organism>
    <name type="scientific">Shigella flexneri</name>
    <dbReference type="NCBI Taxonomy" id="623"/>
    <lineage>
        <taxon>Bacteria</taxon>
        <taxon>Pseudomonadati</taxon>
        <taxon>Pseudomonadota</taxon>
        <taxon>Gammaproteobacteria</taxon>
        <taxon>Enterobacterales</taxon>
        <taxon>Enterobacteriaceae</taxon>
        <taxon>Shigella</taxon>
    </lineage>
</organism>